<sequence>MPQLVPFFFVNQVVFAFIVLTVLIYAFSKYILPRLLRTYISRIYINKL</sequence>
<dbReference type="EMBL" id="J01390">
    <property type="protein sequence ID" value="AAA99204.1"/>
    <property type="molecule type" value="Genomic_DNA"/>
</dbReference>
<dbReference type="EMBL" id="X04161">
    <property type="protein sequence ID" value="CAA27772.1"/>
    <property type="molecule type" value="Genomic_DNA"/>
</dbReference>
<dbReference type="EMBL" id="X01507">
    <property type="protein sequence ID" value="CAA25708.1"/>
    <property type="molecule type" value="Genomic_DNA"/>
</dbReference>
<dbReference type="PIR" id="A93436">
    <property type="entry name" value="EWAS8"/>
</dbReference>
<dbReference type="SMR" id="P0CY42"/>
<dbReference type="GO" id="GO:0031966">
    <property type="term" value="C:mitochondrial membrane"/>
    <property type="evidence" value="ECO:0007669"/>
    <property type="project" value="UniProtKB-SubCell"/>
</dbReference>
<dbReference type="GO" id="GO:0045259">
    <property type="term" value="C:proton-transporting ATP synthase complex"/>
    <property type="evidence" value="ECO:0007669"/>
    <property type="project" value="UniProtKB-KW"/>
</dbReference>
<dbReference type="GO" id="GO:0046933">
    <property type="term" value="F:proton-transporting ATP synthase activity, rotational mechanism"/>
    <property type="evidence" value="ECO:0007669"/>
    <property type="project" value="TreeGrafter"/>
</dbReference>
<dbReference type="InterPro" id="IPR009230">
    <property type="entry name" value="ATP_synth_su8_fun"/>
</dbReference>
<dbReference type="PANTHER" id="PTHR36101">
    <property type="entry name" value="ATP SYNTHASE PROTEIN 8"/>
    <property type="match status" value="1"/>
</dbReference>
<dbReference type="PANTHER" id="PTHR36101:SF1">
    <property type="entry name" value="ATP SYNTHASE PROTEIN 8"/>
    <property type="match status" value="1"/>
</dbReference>
<dbReference type="Pfam" id="PF05933">
    <property type="entry name" value="Fun_ATP-synt_8"/>
    <property type="match status" value="1"/>
</dbReference>
<geneLocation type="mitochondrion"/>
<comment type="function">
    <text evidence="1">Mitochondrial membrane ATP synthase (F(1)F(0) ATP synthase or Complex V) produces ATP from ADP in the presence of a proton gradient across the membrane which is generated by electron transport complexes of the respiratory chain. F-type ATPases consist of two structural domains, F(1) - containing the extramembraneous catalytic core and F(0) - containing the membrane proton channel, linked together by a central stalk and a peripheral stalk. During catalysis, ATP synthesis in the catalytic domain of F(1) is coupled via a rotary mechanism of the central stalk subunits to proton translocation. Part of the complex F(0) domain. Minor subunit located with subunit a in the membrane (By similarity).</text>
</comment>
<comment type="subunit">
    <text evidence="1">F-type ATPases have 2 components, CF(1) - the catalytic core - and CF(0) - the membrane proton channel.</text>
</comment>
<comment type="subcellular location">
    <subcellularLocation>
        <location>Mitochondrion membrane</location>
        <topology>Single-pass membrane protein</topology>
    </subcellularLocation>
</comment>
<comment type="similarity">
    <text evidence="3">Belongs to the ATPase protein 8 family.</text>
</comment>
<reference key="1">
    <citation type="journal article" date="1982" name="Nucleic Acids Res.">
        <title>Nucleotide sequence of Aspergillus nidulans mitochondrial genes coding for ATPase subunit 6, cytochrome oxidase subunit 3, seven unidentified proteins, four tRNAs and L-rRNA.</title>
        <authorList>
            <person name="Netzker R."/>
            <person name="Koechel H.G."/>
            <person name="Basak N."/>
            <person name="Kuentzel H."/>
        </authorList>
    </citation>
    <scope>NUCLEOTIDE SEQUENCE [GENOMIC DNA]</scope>
    <source>
        <strain>pabaA1 biA1</strain>
    </source>
</reference>
<reference key="2">
    <citation type="journal article" date="1982" name="Nucleic Acids Res.">
        <title>Nucleotide sequence of a region of the mitochondrial genome of Aspergillus nidulans including the gene for ATPase subunit 6.</title>
        <authorList>
            <person name="Grisi E."/>
            <person name="Brown T.A."/>
            <person name="Waring R.B."/>
            <person name="Scazzocchio C."/>
            <person name="Davies R.W."/>
        </authorList>
    </citation>
    <scope>NUCLEOTIDE SEQUENCE [GENOMIC DNA]</scope>
    <source>
        <strain>yA2 pyroA4 cnxC3</strain>
    </source>
</reference>
<gene>
    <name type="primary">atp8</name>
</gene>
<organism>
    <name type="scientific">Emericella nidulans</name>
    <name type="common">Aspergillus nidulans</name>
    <dbReference type="NCBI Taxonomy" id="162425"/>
    <lineage>
        <taxon>Eukaryota</taxon>
        <taxon>Fungi</taxon>
        <taxon>Dikarya</taxon>
        <taxon>Ascomycota</taxon>
        <taxon>Pezizomycotina</taxon>
        <taxon>Eurotiomycetes</taxon>
        <taxon>Eurotiomycetidae</taxon>
        <taxon>Eurotiales</taxon>
        <taxon>Aspergillaceae</taxon>
        <taxon>Aspergillus</taxon>
        <taxon>Aspergillus subgen. Nidulantes</taxon>
    </lineage>
</organism>
<proteinExistence type="inferred from homology"/>
<accession>P0CY42</accession>
<accession>P00857</accession>
<accession>Q5AQH5</accession>
<protein>
    <recommendedName>
        <fullName>ATP synthase protein 8</fullName>
    </recommendedName>
    <alternativeName>
        <fullName>A6L</fullName>
    </alternativeName>
    <alternativeName>
        <fullName>F-ATPase subunit 8</fullName>
    </alternativeName>
</protein>
<evidence type="ECO:0000250" key="1"/>
<evidence type="ECO:0000255" key="2"/>
<evidence type="ECO:0000305" key="3"/>
<keyword id="KW-0066">ATP synthesis</keyword>
<keyword id="KW-0138">CF(0)</keyword>
<keyword id="KW-0375">Hydrogen ion transport</keyword>
<keyword id="KW-0406">Ion transport</keyword>
<keyword id="KW-0472">Membrane</keyword>
<keyword id="KW-0496">Mitochondrion</keyword>
<keyword id="KW-0812">Transmembrane</keyword>
<keyword id="KW-1133">Transmembrane helix</keyword>
<keyword id="KW-0813">Transport</keyword>
<feature type="chain" id="PRO_0000414741" description="ATP synthase protein 8">
    <location>
        <begin position="1"/>
        <end position="48"/>
    </location>
</feature>
<feature type="transmembrane region" description="Helical" evidence="2">
    <location>
        <begin position="4"/>
        <end position="24"/>
    </location>
</feature>
<name>ATP8_EMEND</name>